<accession>A8HMZ4</accession>
<reference key="1">
    <citation type="journal article" date="2007" name="Science">
        <title>The Chlamydomonas genome reveals the evolution of key animal and plant functions.</title>
        <authorList>
            <person name="Merchant S.S."/>
            <person name="Prochnik S.E."/>
            <person name="Vallon O."/>
            <person name="Harris E.H."/>
            <person name="Karpowicz S.J."/>
            <person name="Witman G.B."/>
            <person name="Terry A."/>
            <person name="Salamov A."/>
            <person name="Fritz-Laylin L.K."/>
            <person name="Marechal-Drouard L."/>
            <person name="Marshall W.F."/>
            <person name="Qu L.H."/>
            <person name="Nelson D.R."/>
            <person name="Sanderfoot A.A."/>
            <person name="Spalding M.H."/>
            <person name="Kapitonov V.V."/>
            <person name="Ren Q."/>
            <person name="Ferris P."/>
            <person name="Lindquist E."/>
            <person name="Shapiro H."/>
            <person name="Lucas S.M."/>
            <person name="Grimwood J."/>
            <person name="Schmutz J."/>
            <person name="Cardol P."/>
            <person name="Cerutti H."/>
            <person name="Chanfreau G."/>
            <person name="Chen C.L."/>
            <person name="Cognat V."/>
            <person name="Croft M.T."/>
            <person name="Dent R."/>
            <person name="Dutcher S."/>
            <person name="Fernandez E."/>
            <person name="Fukuzawa H."/>
            <person name="Gonzalez-Ballester D."/>
            <person name="Gonzalez-Halphen D."/>
            <person name="Hallmann A."/>
            <person name="Hanikenne M."/>
            <person name="Hippler M."/>
            <person name="Inwood W."/>
            <person name="Jabbari K."/>
            <person name="Kalanon M."/>
            <person name="Kuras R."/>
            <person name="Lefebvre P.A."/>
            <person name="Lemaire S.D."/>
            <person name="Lobanov A.V."/>
            <person name="Lohr M."/>
            <person name="Manuell A."/>
            <person name="Meier I."/>
            <person name="Mets L."/>
            <person name="Mittag M."/>
            <person name="Mittelmeier T."/>
            <person name="Moroney J.V."/>
            <person name="Moseley J."/>
            <person name="Napoli C."/>
            <person name="Nedelcu A.M."/>
            <person name="Niyogi K."/>
            <person name="Novoselov S.V."/>
            <person name="Paulsen I.T."/>
            <person name="Pazour G.J."/>
            <person name="Purton S."/>
            <person name="Ral J.P."/>
            <person name="Riano-Pachon D.M."/>
            <person name="Riekhof W."/>
            <person name="Rymarquis L."/>
            <person name="Schroda M."/>
            <person name="Stern D."/>
            <person name="Umen J."/>
            <person name="Willows R."/>
            <person name="Wilson N."/>
            <person name="Zimmer S.L."/>
            <person name="Allmer J."/>
            <person name="Balk J."/>
            <person name="Bisova K."/>
            <person name="Chen C.J."/>
            <person name="Elias M."/>
            <person name="Gendler K."/>
            <person name="Hauser C."/>
            <person name="Lamb M.R."/>
            <person name="Ledford H."/>
            <person name="Long J.C."/>
            <person name="Minagawa J."/>
            <person name="Page M.D."/>
            <person name="Pan J."/>
            <person name="Pootakham W."/>
            <person name="Roje S."/>
            <person name="Rose A."/>
            <person name="Stahlberg E."/>
            <person name="Terauchi A.M."/>
            <person name="Yang P."/>
            <person name="Ball S."/>
            <person name="Bowler C."/>
            <person name="Dieckmann C.L."/>
            <person name="Gladyshev V.N."/>
            <person name="Green P."/>
            <person name="Jorgensen R."/>
            <person name="Mayfield S."/>
            <person name="Mueller-Roeber B."/>
            <person name="Rajamani S."/>
            <person name="Sayre R.T."/>
            <person name="Brokstein P."/>
            <person name="Dubchak I."/>
            <person name="Goodstein D."/>
            <person name="Hornick L."/>
            <person name="Huang Y.W."/>
            <person name="Jhaveri J."/>
            <person name="Luo Y."/>
            <person name="Martinez D."/>
            <person name="Ngau W.C."/>
            <person name="Otillar B."/>
            <person name="Poliakov A."/>
            <person name="Porter A."/>
            <person name="Szajkowski L."/>
            <person name="Werner G."/>
            <person name="Zhou K."/>
            <person name="Grigoriev I.V."/>
            <person name="Rokhsar D.S."/>
            <person name="Grossman A.R."/>
        </authorList>
    </citation>
    <scope>NUCLEOTIDE SEQUENCE [LARGE SCALE GENOMIC DNA]</scope>
    <source>
        <strain>CC-503</strain>
    </source>
</reference>
<reference key="2">
    <citation type="journal article" date="2013" name="Mol. Biol. Cell">
        <title>The N-DRC forms a conserved biochemical complex that maintains outer doublet alignment and limits microtubule sliding in motile axonemes.</title>
        <authorList>
            <person name="Bower R."/>
            <person name="Tritschler D."/>
            <person name="Vanderwaal K."/>
            <person name="Perrone C.A."/>
            <person name="Mueller J."/>
            <person name="Fox L."/>
            <person name="Sale W.S."/>
            <person name="Porter M.E."/>
        </authorList>
    </citation>
    <scope>FUNCTION</scope>
    <scope>SUBUNIT</scope>
    <scope>SUBCELLULAR LOCATION</scope>
    <scope>DISRUPTION PHENOTYPE</scope>
    <scope>INTERACTION WITH DRC1; DRC2; DRC3; DRC4; DRC7 AND DRC11</scope>
    <scope>IDENTIFICATION BY MASS SPECTROMETRY</scope>
</reference>
<reference key="3">
    <citation type="journal article" date="2015" name="Mol. Biol. Cell">
        <title>Detailed structural and biochemical characterization of the nexin-dynein regulatory complex.</title>
        <authorList>
            <person name="Oda T."/>
            <person name="Yanagisawa H."/>
            <person name="Kikkawa M."/>
        </authorList>
    </citation>
    <scope>FUNCTION</scope>
    <scope>SUBUNIT</scope>
    <scope>SUBCELLULAR LOCATION</scope>
</reference>
<name>DRC5_CHLRE</name>
<proteinExistence type="evidence at protein level"/>
<keyword id="KW-0966">Cell projection</keyword>
<keyword id="KW-0969">Cilium</keyword>
<keyword id="KW-0963">Cytoplasm</keyword>
<keyword id="KW-0206">Cytoskeleton</keyword>
<keyword id="KW-0282">Flagellum</keyword>
<keyword id="KW-0433">Leucine-rich repeat</keyword>
<keyword id="KW-0677">Repeat</keyword>
<evidence type="ECO:0000250" key="1">
    <source>
        <dbReference type="UniProtKB" id="A6H639"/>
    </source>
</evidence>
<evidence type="ECO:0000255" key="2"/>
<evidence type="ECO:0000269" key="3">
    <source>
    </source>
</evidence>
<evidence type="ECO:0000269" key="4">
    <source>
    </source>
</evidence>
<evidence type="ECO:0000303" key="5">
    <source>
    </source>
</evidence>
<evidence type="ECO:0000303" key="6">
    <source>
    </source>
</evidence>
<evidence type="ECO:0000305" key="7"/>
<comment type="function">
    <text evidence="3 4">Component of the nexin-dynein regulatory complex (N-DRC) a key regulator of ciliary/flagellar motility which maintains the alignment and integrity of the distal axoneme and regulates microtubule sliding in motile axonemes (PubMed:23427265, PubMed:25411337). May play a role in the assembly of N-DRC (PubMed:23427265).</text>
</comment>
<comment type="subunit">
    <text evidence="3 4">Component of the nexin-dynein regulatory complex (N-DRC) (PubMed:23427265, PubMed:25411337). Interacts with DRC1, DRC2, DRC3, DRC4, DRC7 and DRC11 (PubMed:25411337).</text>
</comment>
<comment type="subcellular location">
    <subcellularLocation>
        <location evidence="1">Cell projection</location>
        <location evidence="1">Cilium</location>
        <location evidence="1">Flagellum</location>
    </subcellularLocation>
    <subcellularLocation>
        <location evidence="3 4">Cytoplasm</location>
        <location evidence="3 4">Cytoskeleton</location>
        <location evidence="3 4">Flagellum axoneme</location>
    </subcellularLocation>
    <text evidence="1">Detected along the length of the sperm flagellum.</text>
</comment>
<comment type="disruption phenotype">
    <text evidence="3">Defects in DRC5 give the sup-pf4 phenotype characterized by disruption of the assembly of several other N-DRC subunits.</text>
</comment>
<comment type="similarity">
    <text evidence="7">Belongs to the DRC5 family.</text>
</comment>
<sequence length="390" mass="43503">MAAPNLITPLRDICVKVVAANFEGCPTFGPLPDKYVKRIIDILPLDLPLELVGSLIADEDYWRRRSQARWKNCEVAAHGYSWKQLFFERNLMEFLEQYDPAVTDLSSLKRLLTYSRRFVQTVHIRQLPSHLDLQILFECMVNTPSSLALSYNLKEVGMDYDRSLFGMKLSDCRALAKALEHTETLTHLDLSNNSLDDDKVRMLASGLVENLSITHLNLSHNKIADRGVRALAKLLDGHSVISLLELHDNQIHTEGAESLARAFKSNQCLLSVNLRLNRMGDEGCKAVVESVRGSPTLQRLNISANAAGPGTAAAVVALLRLNNTLTELDVSCNQFGEDACGNVRRALEQNGSVRLMDVRMTGINPDDEMAIAENLRARQERVDKARVLGK</sequence>
<protein>
    <recommendedName>
        <fullName evidence="5 6">Dynein regulatory complex subunit 5</fullName>
    </recommendedName>
    <alternativeName>
        <fullName>Flagellar-associated protein 155</fullName>
    </alternativeName>
</protein>
<feature type="chain" id="PRO_0000444015" description="Dynein regulatory complex subunit 5">
    <location>
        <begin position="1"/>
        <end position="390"/>
    </location>
</feature>
<feature type="repeat" description="LRR 1" evidence="2">
    <location>
        <begin position="182"/>
        <end position="205"/>
    </location>
</feature>
<feature type="repeat" description="LRR 2" evidence="2">
    <location>
        <begin position="210"/>
        <end position="233"/>
    </location>
</feature>
<feature type="repeat" description="LRR 3" evidence="2">
    <location>
        <begin position="238"/>
        <end position="261"/>
    </location>
</feature>
<organism>
    <name type="scientific">Chlamydomonas reinhardtii</name>
    <name type="common">Chlamydomonas smithii</name>
    <dbReference type="NCBI Taxonomy" id="3055"/>
    <lineage>
        <taxon>Eukaryota</taxon>
        <taxon>Viridiplantae</taxon>
        <taxon>Chlorophyta</taxon>
        <taxon>core chlorophytes</taxon>
        <taxon>Chlorophyceae</taxon>
        <taxon>CS clade</taxon>
        <taxon>Chlamydomonadales</taxon>
        <taxon>Chlamydomonadaceae</taxon>
        <taxon>Chlamydomonas</taxon>
    </lineage>
</organism>
<dbReference type="EMBL" id="DS496108">
    <property type="protein sequence ID" value="EDP09462.1"/>
    <property type="molecule type" value="Genomic_DNA"/>
</dbReference>
<dbReference type="RefSeq" id="XP_001689724.1">
    <property type="nucleotide sequence ID" value="XM_001689672.1"/>
</dbReference>
<dbReference type="SMR" id="A8HMZ4"/>
<dbReference type="PaxDb" id="3055-EDP09462"/>
<dbReference type="GeneID" id="5715659"/>
<dbReference type="KEGG" id="cre:CHLRE_01g045350v5"/>
<dbReference type="eggNOG" id="KOG0619">
    <property type="taxonomic scope" value="Eukaryota"/>
</dbReference>
<dbReference type="eggNOG" id="KOG4308">
    <property type="taxonomic scope" value="Eukaryota"/>
</dbReference>
<dbReference type="HOGENOM" id="CLU_029623_1_2_1"/>
<dbReference type="OrthoDB" id="341587at2759"/>
<dbReference type="GO" id="GO:0005930">
    <property type="term" value="C:axoneme"/>
    <property type="evidence" value="ECO:0000314"/>
    <property type="project" value="UniProtKB"/>
</dbReference>
<dbReference type="GO" id="GO:0005737">
    <property type="term" value="C:cytoplasm"/>
    <property type="evidence" value="ECO:0000314"/>
    <property type="project" value="GeneDB"/>
</dbReference>
<dbReference type="GO" id="GO:0031514">
    <property type="term" value="C:motile cilium"/>
    <property type="evidence" value="ECO:0007669"/>
    <property type="project" value="UniProtKB-SubCell"/>
</dbReference>
<dbReference type="FunFam" id="3.80.10.10:FF:001685">
    <property type="entry name" value="Dynein regulatory complex subunit 5"/>
    <property type="match status" value="1"/>
</dbReference>
<dbReference type="FunFam" id="3.80.10.10:FF:001803">
    <property type="entry name" value="Dynein regulatory complex subunit 5"/>
    <property type="match status" value="1"/>
</dbReference>
<dbReference type="Gene3D" id="3.80.10.10">
    <property type="entry name" value="Ribonuclease Inhibitor"/>
    <property type="match status" value="2"/>
</dbReference>
<dbReference type="InterPro" id="IPR052410">
    <property type="entry name" value="DRC5"/>
</dbReference>
<dbReference type="InterPro" id="IPR001611">
    <property type="entry name" value="Leu-rich_rpt"/>
</dbReference>
<dbReference type="InterPro" id="IPR032675">
    <property type="entry name" value="LRR_dom_sf"/>
</dbReference>
<dbReference type="PANTHER" id="PTHR24107:SF20">
    <property type="entry name" value="DYNEIN REGULATORY COMPLEX SUBUNIT 5"/>
    <property type="match status" value="1"/>
</dbReference>
<dbReference type="PANTHER" id="PTHR24107">
    <property type="entry name" value="YNEIN REGULATORY COMPLEX SUBUNIT 5"/>
    <property type="match status" value="1"/>
</dbReference>
<dbReference type="Pfam" id="PF13516">
    <property type="entry name" value="LRR_6"/>
    <property type="match status" value="5"/>
</dbReference>
<dbReference type="SMART" id="SM00368">
    <property type="entry name" value="LRR_RI"/>
    <property type="match status" value="7"/>
</dbReference>
<dbReference type="SUPFAM" id="SSF52047">
    <property type="entry name" value="RNI-like"/>
    <property type="match status" value="1"/>
</dbReference>
<gene>
    <name evidence="5 6" type="primary">DRC5</name>
    <name type="synonym">FAP155</name>
    <name type="ORF">CHLREDRAFT_190077</name>
</gene>